<keyword id="KW-0963">Cytoplasm</keyword>
<keyword id="KW-0378">Hydrolase</keyword>
<keyword id="KW-0460">Magnesium</keyword>
<keyword id="KW-0479">Metal-binding</keyword>
<keyword id="KW-1185">Reference proteome</keyword>
<gene>
    <name evidence="1" type="primary">ppa</name>
    <name type="ordered locus">PD_1226</name>
</gene>
<feature type="chain" id="PRO_0000137545" description="Inorganic pyrophosphatase">
    <location>
        <begin position="1"/>
        <end position="178"/>
    </location>
</feature>
<feature type="binding site" evidence="1">
    <location>
        <position position="30"/>
    </location>
    <ligand>
        <name>substrate</name>
    </ligand>
</feature>
<feature type="binding site" evidence="1">
    <location>
        <position position="44"/>
    </location>
    <ligand>
        <name>substrate</name>
    </ligand>
</feature>
<feature type="binding site" evidence="1">
    <location>
        <position position="56"/>
    </location>
    <ligand>
        <name>substrate</name>
    </ligand>
</feature>
<feature type="binding site" evidence="1">
    <location>
        <position position="66"/>
    </location>
    <ligand>
        <name>Mg(2+)</name>
        <dbReference type="ChEBI" id="CHEBI:18420"/>
        <label>1</label>
    </ligand>
</feature>
<feature type="binding site" evidence="1">
    <location>
        <position position="71"/>
    </location>
    <ligand>
        <name>Mg(2+)</name>
        <dbReference type="ChEBI" id="CHEBI:18420"/>
        <label>1</label>
    </ligand>
</feature>
<feature type="binding site" evidence="1">
    <location>
        <position position="71"/>
    </location>
    <ligand>
        <name>Mg(2+)</name>
        <dbReference type="ChEBI" id="CHEBI:18420"/>
        <label>2</label>
    </ligand>
</feature>
<feature type="binding site" evidence="1">
    <location>
        <position position="103"/>
    </location>
    <ligand>
        <name>Mg(2+)</name>
        <dbReference type="ChEBI" id="CHEBI:18420"/>
        <label>1</label>
    </ligand>
</feature>
<feature type="binding site" evidence="1">
    <location>
        <position position="142"/>
    </location>
    <ligand>
        <name>substrate</name>
    </ligand>
</feature>
<dbReference type="EC" id="3.6.1.1" evidence="1"/>
<dbReference type="EMBL" id="AE009442">
    <property type="protein sequence ID" value="AAO29076.1"/>
    <property type="molecule type" value="Genomic_DNA"/>
</dbReference>
<dbReference type="RefSeq" id="WP_004088597.1">
    <property type="nucleotide sequence ID" value="NC_004556.1"/>
</dbReference>
<dbReference type="SMR" id="P65751"/>
<dbReference type="KEGG" id="xft:PD_1226"/>
<dbReference type="HOGENOM" id="CLU_073198_1_0_6"/>
<dbReference type="Proteomes" id="UP000002516">
    <property type="component" value="Chromosome"/>
</dbReference>
<dbReference type="GO" id="GO:0005737">
    <property type="term" value="C:cytoplasm"/>
    <property type="evidence" value="ECO:0007669"/>
    <property type="project" value="UniProtKB-SubCell"/>
</dbReference>
<dbReference type="GO" id="GO:0004427">
    <property type="term" value="F:inorganic diphosphate phosphatase activity"/>
    <property type="evidence" value="ECO:0007669"/>
    <property type="project" value="UniProtKB-UniRule"/>
</dbReference>
<dbReference type="GO" id="GO:0000287">
    <property type="term" value="F:magnesium ion binding"/>
    <property type="evidence" value="ECO:0007669"/>
    <property type="project" value="UniProtKB-UniRule"/>
</dbReference>
<dbReference type="GO" id="GO:0006796">
    <property type="term" value="P:phosphate-containing compound metabolic process"/>
    <property type="evidence" value="ECO:0007669"/>
    <property type="project" value="InterPro"/>
</dbReference>
<dbReference type="CDD" id="cd00412">
    <property type="entry name" value="pyrophosphatase"/>
    <property type="match status" value="1"/>
</dbReference>
<dbReference type="FunFam" id="3.90.80.10:FF:000001">
    <property type="entry name" value="Inorganic pyrophosphatase"/>
    <property type="match status" value="1"/>
</dbReference>
<dbReference type="Gene3D" id="3.90.80.10">
    <property type="entry name" value="Inorganic pyrophosphatase"/>
    <property type="match status" value="1"/>
</dbReference>
<dbReference type="HAMAP" id="MF_00209">
    <property type="entry name" value="Inorganic_PPase"/>
    <property type="match status" value="1"/>
</dbReference>
<dbReference type="InterPro" id="IPR008162">
    <property type="entry name" value="Pyrophosphatase"/>
</dbReference>
<dbReference type="InterPro" id="IPR036649">
    <property type="entry name" value="Pyrophosphatase_sf"/>
</dbReference>
<dbReference type="NCBIfam" id="NF002317">
    <property type="entry name" value="PRK01250.1"/>
    <property type="match status" value="1"/>
</dbReference>
<dbReference type="PANTHER" id="PTHR10286">
    <property type="entry name" value="INORGANIC PYROPHOSPHATASE"/>
    <property type="match status" value="1"/>
</dbReference>
<dbReference type="Pfam" id="PF00719">
    <property type="entry name" value="Pyrophosphatase"/>
    <property type="match status" value="1"/>
</dbReference>
<dbReference type="SUPFAM" id="SSF50324">
    <property type="entry name" value="Inorganic pyrophosphatase"/>
    <property type="match status" value="1"/>
</dbReference>
<dbReference type="PROSITE" id="PS00387">
    <property type="entry name" value="PPASE"/>
    <property type="match status" value="1"/>
</dbReference>
<reference key="1">
    <citation type="journal article" date="2003" name="J. Bacteriol.">
        <title>Comparative analyses of the complete genome sequences of Pierce's disease and citrus variegated chlorosis strains of Xylella fastidiosa.</title>
        <authorList>
            <person name="Van Sluys M.A."/>
            <person name="de Oliveira M.C."/>
            <person name="Monteiro-Vitorello C.B."/>
            <person name="Miyaki C.Y."/>
            <person name="Furlan L.R."/>
            <person name="Camargo L.E.A."/>
            <person name="da Silva A.C.R."/>
            <person name="Moon D.H."/>
            <person name="Takita M.A."/>
            <person name="Lemos E.G.M."/>
            <person name="Machado M.A."/>
            <person name="Ferro M.I.T."/>
            <person name="da Silva F.R."/>
            <person name="Goldman M.H.S."/>
            <person name="Goldman G.H."/>
            <person name="Lemos M.V.F."/>
            <person name="El-Dorry H."/>
            <person name="Tsai S.M."/>
            <person name="Carrer H."/>
            <person name="Carraro D.M."/>
            <person name="de Oliveira R.C."/>
            <person name="Nunes L.R."/>
            <person name="Siqueira W.J."/>
            <person name="Coutinho L.L."/>
            <person name="Kimura E.T."/>
            <person name="Ferro E.S."/>
            <person name="Harakava R."/>
            <person name="Kuramae E.E."/>
            <person name="Marino C.L."/>
            <person name="Giglioti E."/>
            <person name="Abreu I.L."/>
            <person name="Alves L.M.C."/>
            <person name="do Amaral A.M."/>
            <person name="Baia G.S."/>
            <person name="Blanco S.R."/>
            <person name="Brito M.S."/>
            <person name="Cannavan F.S."/>
            <person name="Celestino A.V."/>
            <person name="da Cunha A.F."/>
            <person name="Fenille R.C."/>
            <person name="Ferro J.A."/>
            <person name="Formighieri E.F."/>
            <person name="Kishi L.T."/>
            <person name="Leoni S.G."/>
            <person name="Oliveira A.R."/>
            <person name="Rosa V.E. Jr."/>
            <person name="Sassaki F.T."/>
            <person name="Sena J.A.D."/>
            <person name="de Souza A.A."/>
            <person name="Truffi D."/>
            <person name="Tsukumo F."/>
            <person name="Yanai G.M."/>
            <person name="Zaros L.G."/>
            <person name="Civerolo E.L."/>
            <person name="Simpson A.J.G."/>
            <person name="Almeida N.F. Jr."/>
            <person name="Setubal J.C."/>
            <person name="Kitajima J.P."/>
        </authorList>
    </citation>
    <scope>NUCLEOTIDE SEQUENCE [LARGE SCALE GENOMIC DNA]</scope>
    <source>
        <strain>Temecula1 / ATCC 700964</strain>
    </source>
</reference>
<sequence>MGLELVNAGNNLPEEINVIIEIPKDSEPVKYEVDKASGAIFVDRILSTPMRYPCNYGYVPNTLCGDGDPVDVMVVLPLPLVPGSVVRCRPVGVLQMKDEAGNDEKLLAVPVSKIFSGYSHIEDINQVSAHWLERIGHFFEHYKDLEKGKWVEIDGWGNATTAKQILTNAVQRYKDTLP</sequence>
<accession>P65751</accession>
<accession>Q9PBH3</accession>
<name>IPYR_XYLFT</name>
<evidence type="ECO:0000255" key="1">
    <source>
        <dbReference type="HAMAP-Rule" id="MF_00209"/>
    </source>
</evidence>
<comment type="function">
    <text evidence="1">Catalyzes the hydrolysis of inorganic pyrophosphate (PPi) forming two phosphate ions.</text>
</comment>
<comment type="catalytic activity">
    <reaction evidence="1">
        <text>diphosphate + H2O = 2 phosphate + H(+)</text>
        <dbReference type="Rhea" id="RHEA:24576"/>
        <dbReference type="ChEBI" id="CHEBI:15377"/>
        <dbReference type="ChEBI" id="CHEBI:15378"/>
        <dbReference type="ChEBI" id="CHEBI:33019"/>
        <dbReference type="ChEBI" id="CHEBI:43474"/>
        <dbReference type="EC" id="3.6.1.1"/>
    </reaction>
</comment>
<comment type="cofactor">
    <cofactor evidence="1">
        <name>Mg(2+)</name>
        <dbReference type="ChEBI" id="CHEBI:18420"/>
    </cofactor>
</comment>
<comment type="subunit">
    <text evidence="1">Homohexamer.</text>
</comment>
<comment type="subcellular location">
    <subcellularLocation>
        <location evidence="1">Cytoplasm</location>
    </subcellularLocation>
</comment>
<comment type="similarity">
    <text evidence="1">Belongs to the PPase family.</text>
</comment>
<organism>
    <name type="scientific">Xylella fastidiosa (strain Temecula1 / ATCC 700964)</name>
    <dbReference type="NCBI Taxonomy" id="183190"/>
    <lineage>
        <taxon>Bacteria</taxon>
        <taxon>Pseudomonadati</taxon>
        <taxon>Pseudomonadota</taxon>
        <taxon>Gammaproteobacteria</taxon>
        <taxon>Lysobacterales</taxon>
        <taxon>Lysobacteraceae</taxon>
        <taxon>Xylella</taxon>
    </lineage>
</organism>
<protein>
    <recommendedName>
        <fullName evidence="1">Inorganic pyrophosphatase</fullName>
        <ecNumber evidence="1">3.6.1.1</ecNumber>
    </recommendedName>
    <alternativeName>
        <fullName evidence="1">Pyrophosphate phospho-hydrolase</fullName>
        <shortName evidence="1">PPase</shortName>
    </alternativeName>
</protein>
<proteinExistence type="inferred from homology"/>